<feature type="chain" id="PRO_0000062209" description="Large ribosomal subunit protein uL16">
    <location>
        <begin position="1"/>
        <end position="144"/>
    </location>
</feature>
<feature type="region of interest" description="Disordered" evidence="2">
    <location>
        <begin position="1"/>
        <end position="23"/>
    </location>
</feature>
<feature type="compositionally biased region" description="Basic residues" evidence="2">
    <location>
        <begin position="1"/>
        <end position="19"/>
    </location>
</feature>
<name>RL16_STAES</name>
<accession>Q8CRG7</accession>
<sequence>MLLPKRVKYRRQHRPKTTGRSKGGNYVTFGEYGLQATTTSWITSRQIESARIAMTRYMKRGGKVWIKIFPHTPYTKKPLEVRMGAGKGAVEGWIAVVKPGRILFEVAGVPEEVAREALRLASHKLPVKSKFVKREELGGETNES</sequence>
<keyword id="KW-0687">Ribonucleoprotein</keyword>
<keyword id="KW-0689">Ribosomal protein</keyword>
<keyword id="KW-0694">RNA-binding</keyword>
<keyword id="KW-0699">rRNA-binding</keyword>
<keyword id="KW-0820">tRNA-binding</keyword>
<organism>
    <name type="scientific">Staphylococcus epidermidis (strain ATCC 12228 / FDA PCI 1200)</name>
    <dbReference type="NCBI Taxonomy" id="176280"/>
    <lineage>
        <taxon>Bacteria</taxon>
        <taxon>Bacillati</taxon>
        <taxon>Bacillota</taxon>
        <taxon>Bacilli</taxon>
        <taxon>Bacillales</taxon>
        <taxon>Staphylococcaceae</taxon>
        <taxon>Staphylococcus</taxon>
    </lineage>
</organism>
<reference key="1">
    <citation type="journal article" date="2003" name="Mol. Microbiol.">
        <title>Genome-based analysis of virulence genes in a non-biofilm-forming Staphylococcus epidermidis strain (ATCC 12228).</title>
        <authorList>
            <person name="Zhang Y.-Q."/>
            <person name="Ren S.-X."/>
            <person name="Li H.-L."/>
            <person name="Wang Y.-X."/>
            <person name="Fu G."/>
            <person name="Yang J."/>
            <person name="Qin Z.-Q."/>
            <person name="Miao Y.-G."/>
            <person name="Wang W.-Y."/>
            <person name="Chen R.-S."/>
            <person name="Shen Y."/>
            <person name="Chen Z."/>
            <person name="Yuan Z.-H."/>
            <person name="Zhao G.-P."/>
            <person name="Qu D."/>
            <person name="Danchin A."/>
            <person name="Wen Y.-M."/>
        </authorList>
    </citation>
    <scope>NUCLEOTIDE SEQUENCE [LARGE SCALE GENOMIC DNA]</scope>
    <source>
        <strain>ATCC 12228 / FDA PCI 1200</strain>
    </source>
</reference>
<protein>
    <recommendedName>
        <fullName evidence="1">Large ribosomal subunit protein uL16</fullName>
    </recommendedName>
    <alternativeName>
        <fullName evidence="3">50S ribosomal protein L16</fullName>
    </alternativeName>
</protein>
<comment type="function">
    <text evidence="1">Binds 23S rRNA and is also seen to make contacts with the A and possibly P site tRNAs.</text>
</comment>
<comment type="subunit">
    <text evidence="1">Part of the 50S ribosomal subunit.</text>
</comment>
<comment type="similarity">
    <text evidence="1">Belongs to the universal ribosomal protein uL16 family.</text>
</comment>
<evidence type="ECO:0000255" key="1">
    <source>
        <dbReference type="HAMAP-Rule" id="MF_01342"/>
    </source>
</evidence>
<evidence type="ECO:0000256" key="2">
    <source>
        <dbReference type="SAM" id="MobiDB-lite"/>
    </source>
</evidence>
<evidence type="ECO:0000305" key="3"/>
<proteinExistence type="inferred from homology"/>
<dbReference type="EMBL" id="AE015929">
    <property type="protein sequence ID" value="AAO05458.1"/>
    <property type="molecule type" value="Genomic_DNA"/>
</dbReference>
<dbReference type="RefSeq" id="NP_765372.1">
    <property type="nucleotide sequence ID" value="NC_004461.1"/>
</dbReference>
<dbReference type="RefSeq" id="WP_001829782.1">
    <property type="nucleotide sequence ID" value="NZ_WBME01000007.1"/>
</dbReference>
<dbReference type="SMR" id="Q8CRG7"/>
<dbReference type="GeneID" id="50018080"/>
<dbReference type="KEGG" id="sep:SE_1817"/>
<dbReference type="PATRIC" id="fig|176280.10.peg.1773"/>
<dbReference type="eggNOG" id="COG0197">
    <property type="taxonomic scope" value="Bacteria"/>
</dbReference>
<dbReference type="HOGENOM" id="CLU_078858_2_1_9"/>
<dbReference type="OrthoDB" id="9802589at2"/>
<dbReference type="Proteomes" id="UP000001411">
    <property type="component" value="Chromosome"/>
</dbReference>
<dbReference type="GO" id="GO:0022625">
    <property type="term" value="C:cytosolic large ribosomal subunit"/>
    <property type="evidence" value="ECO:0007669"/>
    <property type="project" value="TreeGrafter"/>
</dbReference>
<dbReference type="GO" id="GO:0019843">
    <property type="term" value="F:rRNA binding"/>
    <property type="evidence" value="ECO:0007669"/>
    <property type="project" value="UniProtKB-UniRule"/>
</dbReference>
<dbReference type="GO" id="GO:0003735">
    <property type="term" value="F:structural constituent of ribosome"/>
    <property type="evidence" value="ECO:0007669"/>
    <property type="project" value="InterPro"/>
</dbReference>
<dbReference type="GO" id="GO:0000049">
    <property type="term" value="F:tRNA binding"/>
    <property type="evidence" value="ECO:0007669"/>
    <property type="project" value="UniProtKB-KW"/>
</dbReference>
<dbReference type="GO" id="GO:0006412">
    <property type="term" value="P:translation"/>
    <property type="evidence" value="ECO:0007669"/>
    <property type="project" value="UniProtKB-UniRule"/>
</dbReference>
<dbReference type="CDD" id="cd01433">
    <property type="entry name" value="Ribosomal_L16_L10e"/>
    <property type="match status" value="1"/>
</dbReference>
<dbReference type="FunFam" id="3.90.1170.10:FF:000001">
    <property type="entry name" value="50S ribosomal protein L16"/>
    <property type="match status" value="1"/>
</dbReference>
<dbReference type="Gene3D" id="3.90.1170.10">
    <property type="entry name" value="Ribosomal protein L10e/L16"/>
    <property type="match status" value="1"/>
</dbReference>
<dbReference type="HAMAP" id="MF_01342">
    <property type="entry name" value="Ribosomal_uL16"/>
    <property type="match status" value="1"/>
</dbReference>
<dbReference type="InterPro" id="IPR047873">
    <property type="entry name" value="Ribosomal_uL16"/>
</dbReference>
<dbReference type="InterPro" id="IPR000114">
    <property type="entry name" value="Ribosomal_uL16_bact-type"/>
</dbReference>
<dbReference type="InterPro" id="IPR020798">
    <property type="entry name" value="Ribosomal_uL16_CS"/>
</dbReference>
<dbReference type="InterPro" id="IPR016180">
    <property type="entry name" value="Ribosomal_uL16_dom"/>
</dbReference>
<dbReference type="InterPro" id="IPR036920">
    <property type="entry name" value="Ribosomal_uL16_sf"/>
</dbReference>
<dbReference type="NCBIfam" id="TIGR01164">
    <property type="entry name" value="rplP_bact"/>
    <property type="match status" value="1"/>
</dbReference>
<dbReference type="PANTHER" id="PTHR12220">
    <property type="entry name" value="50S/60S RIBOSOMAL PROTEIN L16"/>
    <property type="match status" value="1"/>
</dbReference>
<dbReference type="PANTHER" id="PTHR12220:SF13">
    <property type="entry name" value="LARGE RIBOSOMAL SUBUNIT PROTEIN UL16M"/>
    <property type="match status" value="1"/>
</dbReference>
<dbReference type="Pfam" id="PF00252">
    <property type="entry name" value="Ribosomal_L16"/>
    <property type="match status" value="1"/>
</dbReference>
<dbReference type="PRINTS" id="PR00060">
    <property type="entry name" value="RIBOSOMALL16"/>
</dbReference>
<dbReference type="SUPFAM" id="SSF54686">
    <property type="entry name" value="Ribosomal protein L16p/L10e"/>
    <property type="match status" value="1"/>
</dbReference>
<dbReference type="PROSITE" id="PS00586">
    <property type="entry name" value="RIBOSOMAL_L16_1"/>
    <property type="match status" value="1"/>
</dbReference>
<dbReference type="PROSITE" id="PS00701">
    <property type="entry name" value="RIBOSOMAL_L16_2"/>
    <property type="match status" value="1"/>
</dbReference>
<gene>
    <name evidence="1" type="primary">rplP</name>
    <name type="ordered locus">SE_1817</name>
</gene>